<accession>P83399</accession>
<dbReference type="SMR" id="P83399"/>
<dbReference type="GO" id="GO:0050832">
    <property type="term" value="P:defense response to fungus"/>
    <property type="evidence" value="ECO:0007669"/>
    <property type="project" value="UniProtKB-KW"/>
</dbReference>
<dbReference type="GO" id="GO:0031640">
    <property type="term" value="P:killing of cells of another organism"/>
    <property type="evidence" value="ECO:0007669"/>
    <property type="project" value="UniProtKB-KW"/>
</dbReference>
<dbReference type="CDD" id="cd00107">
    <property type="entry name" value="Knot1"/>
    <property type="match status" value="1"/>
</dbReference>
<dbReference type="Gene3D" id="3.30.30.10">
    <property type="entry name" value="Knottin, scorpion toxin-like"/>
    <property type="match status" value="1"/>
</dbReference>
<dbReference type="InterPro" id="IPR008176">
    <property type="entry name" value="Defensin_plant"/>
</dbReference>
<dbReference type="InterPro" id="IPR003614">
    <property type="entry name" value="Scorpion_toxin-like"/>
</dbReference>
<dbReference type="InterPro" id="IPR036574">
    <property type="entry name" value="Scorpion_toxin-like_sf"/>
</dbReference>
<dbReference type="Pfam" id="PF00304">
    <property type="entry name" value="Gamma-thionin"/>
    <property type="match status" value="1"/>
</dbReference>
<dbReference type="PRINTS" id="PR00288">
    <property type="entry name" value="PUROTHIONIN"/>
</dbReference>
<dbReference type="SMART" id="SM00505">
    <property type="entry name" value="Knot1"/>
    <property type="match status" value="1"/>
</dbReference>
<dbReference type="SUPFAM" id="SSF57095">
    <property type="entry name" value="Scorpion toxin-like"/>
    <property type="match status" value="1"/>
</dbReference>
<dbReference type="PROSITE" id="PS00940">
    <property type="entry name" value="GAMMA_THIONIN"/>
    <property type="match status" value="1"/>
</dbReference>
<sequence>RVCESQSHGFKGACTGDHNCALVCRNEGFSGGNCRGFRRRCFCTLKC</sequence>
<name>DEF1_VIGUN</name>
<keyword id="KW-0929">Antimicrobial</keyword>
<keyword id="KW-0903">Direct protein sequencing</keyword>
<keyword id="KW-1015">Disulfide bond</keyword>
<keyword id="KW-0295">Fungicide</keyword>
<keyword id="KW-0611">Plant defense</keyword>
<reference evidence="3" key="1">
    <citation type="journal article" date="2002" name="Proteins">
        <title>Inhibition of trypsin by cowpea thionin: characterization, molecular modeling, and docking.</title>
        <authorList>
            <person name="Melo F.R."/>
            <person name="Rigden D.J."/>
            <person name="Franco O.L."/>
            <person name="Mello L.V."/>
            <person name="Ary M.B."/>
            <person name="Grossi de Sa M.F."/>
            <person name="Bloch C. Jr."/>
        </authorList>
    </citation>
    <scope>PROTEIN SEQUENCE</scope>
    <scope>FUNCTION</scope>
    <scope>SUBUNIT</scope>
    <scope>MASS SPECTROMETRY</scope>
    <scope>3D-STRUCTURE MODELING</scope>
    <source>
        <strain evidence="2">cv. Epace-10</strain>
        <tissue evidence="2">Cotyledon</tissue>
    </source>
</reference>
<protein>
    <recommendedName>
        <fullName>Defensin-like protein 1</fullName>
    </recommendedName>
    <alternativeName>
        <fullName>Cp-thionin I</fullName>
    </alternativeName>
    <alternativeName>
        <fullName>Cp-thionin-1</fullName>
    </alternativeName>
    <alternativeName>
        <fullName>Gamma-thionin I</fullName>
    </alternativeName>
</protein>
<comment type="function">
    <text evidence="2">Inhibits trypsin but not chymotrypsin.</text>
</comment>
<comment type="subunit">
    <text evidence="2">Monomer and homodimer.</text>
</comment>
<comment type="mass spectrometry"/>
<comment type="similarity">
    <text evidence="3">Belongs to the DEFL family. Protease inhibitor I18 (RTI/MTI-2) subfamily.</text>
</comment>
<comment type="caution">
    <text evidence="4">Was initially thought to be a thionin.</text>
</comment>
<proteinExistence type="evidence at protein level"/>
<evidence type="ECO:0000250" key="1">
    <source>
        <dbReference type="UniProtKB" id="P21925"/>
    </source>
</evidence>
<evidence type="ECO:0000269" key="2">
    <source>
    </source>
</evidence>
<evidence type="ECO:0000305" key="3"/>
<evidence type="ECO:0000305" key="4">
    <source>
    </source>
</evidence>
<feature type="chain" id="PRO_0000074260" description="Defensin-like protein 1">
    <location>
        <begin position="1"/>
        <end position="47"/>
    </location>
</feature>
<feature type="site" description="Interaction with trypsin" evidence="2">
    <location>
        <position position="11"/>
    </location>
</feature>
<feature type="disulfide bond" evidence="1">
    <location>
        <begin position="3"/>
        <end position="47"/>
    </location>
</feature>
<feature type="disulfide bond" evidence="1">
    <location>
        <begin position="14"/>
        <end position="34"/>
    </location>
</feature>
<feature type="disulfide bond" evidence="1">
    <location>
        <begin position="20"/>
        <end position="41"/>
    </location>
</feature>
<feature type="disulfide bond" evidence="1">
    <location>
        <begin position="24"/>
        <end position="43"/>
    </location>
</feature>
<organism>
    <name type="scientific">Vigna unguiculata</name>
    <name type="common">Cowpea</name>
    <dbReference type="NCBI Taxonomy" id="3917"/>
    <lineage>
        <taxon>Eukaryota</taxon>
        <taxon>Viridiplantae</taxon>
        <taxon>Streptophyta</taxon>
        <taxon>Embryophyta</taxon>
        <taxon>Tracheophyta</taxon>
        <taxon>Spermatophyta</taxon>
        <taxon>Magnoliopsida</taxon>
        <taxon>eudicotyledons</taxon>
        <taxon>Gunneridae</taxon>
        <taxon>Pentapetalae</taxon>
        <taxon>rosids</taxon>
        <taxon>fabids</taxon>
        <taxon>Fabales</taxon>
        <taxon>Fabaceae</taxon>
        <taxon>Papilionoideae</taxon>
        <taxon>50 kb inversion clade</taxon>
        <taxon>NPAAA clade</taxon>
        <taxon>indigoferoid/millettioid clade</taxon>
        <taxon>Phaseoleae</taxon>
        <taxon>Vigna</taxon>
    </lineage>
</organism>